<evidence type="ECO:0000305" key="1"/>
<sequence length="365" mass="41873">MLVPPEMIAVQSKTVFQINKYYAEKVQLRMGNIARVIREICKIVQEVLREVEVQEPRFISSLVECNGRFEGIEVVTPNFFEVVLYLNQMGVFNFVDDGSLPGAAVLKLSDGRKRSMSLWVEFITASGYLSARKIRSRFHTLVAQAVEKCPYREMVKLVPDTTEVKLKIRERYIVQITPAFKCTGIWPRSAAHWPIPHIPWPHPALVAEVKSEGFDLLSKESVILQGKNANIEGDAWILHFTEAENRLLQGGYRKRCLSILKTLCDRHLDLPGAPITYYHLKTLLLYECEKHPREAEWDANCIGDRLNGIFLQMISCLQNRRCPHYFLPSLDLFKGKSPTALDNASKHVWKLCREILTSTKAFDRL</sequence>
<keyword id="KW-1185">Reference proteome</keyword>
<protein>
    <recommendedName>
        <fullName>Protein mab-21-like</fullName>
    </recommendedName>
</protein>
<name>MB21L_AEDAE</name>
<comment type="similarity">
    <text evidence="1">Belongs to the mab-21 family.</text>
</comment>
<comment type="caution">
    <text evidence="1">It is uncertain whether Met-1 or Met-7 is the initiator.</text>
</comment>
<organism>
    <name type="scientific">Aedes aegypti</name>
    <name type="common">Yellowfever mosquito</name>
    <name type="synonym">Culex aegypti</name>
    <dbReference type="NCBI Taxonomy" id="7159"/>
    <lineage>
        <taxon>Eukaryota</taxon>
        <taxon>Metazoa</taxon>
        <taxon>Ecdysozoa</taxon>
        <taxon>Arthropoda</taxon>
        <taxon>Hexapoda</taxon>
        <taxon>Insecta</taxon>
        <taxon>Pterygota</taxon>
        <taxon>Neoptera</taxon>
        <taxon>Endopterygota</taxon>
        <taxon>Diptera</taxon>
        <taxon>Nematocera</taxon>
        <taxon>Culicoidea</taxon>
        <taxon>Culicidae</taxon>
        <taxon>Culicinae</taxon>
        <taxon>Aedini</taxon>
        <taxon>Aedes</taxon>
        <taxon>Stegomyia</taxon>
    </lineage>
</organism>
<reference key="1">
    <citation type="journal article" date="2007" name="Science">
        <title>Genome sequence of Aedes aegypti, a major arbovirus vector.</title>
        <authorList>
            <person name="Nene V."/>
            <person name="Wortman J.R."/>
            <person name="Lawson D."/>
            <person name="Haas B.J."/>
            <person name="Kodira C.D."/>
            <person name="Tu Z.J."/>
            <person name="Loftus B.J."/>
            <person name="Xi Z."/>
            <person name="Megy K."/>
            <person name="Grabherr M."/>
            <person name="Ren Q."/>
            <person name="Zdobnov E.M."/>
            <person name="Lobo N.F."/>
            <person name="Campbell K.S."/>
            <person name="Brown S.E."/>
            <person name="Bonaldo M.F."/>
            <person name="Zhu J."/>
            <person name="Sinkins S.P."/>
            <person name="Hogenkamp D.G."/>
            <person name="Amedeo P."/>
            <person name="Arensburger P."/>
            <person name="Atkinson P.W."/>
            <person name="Bidwell S.L."/>
            <person name="Biedler J."/>
            <person name="Birney E."/>
            <person name="Bruggner R.V."/>
            <person name="Costas J."/>
            <person name="Coy M.R."/>
            <person name="Crabtree J."/>
            <person name="Crawford M."/>
            <person name="DeBruyn B."/>
            <person name="DeCaprio D."/>
            <person name="Eiglmeier K."/>
            <person name="Eisenstadt E."/>
            <person name="El-Dorry H."/>
            <person name="Gelbart W.M."/>
            <person name="Gomes S.L."/>
            <person name="Hammond M."/>
            <person name="Hannick L.I."/>
            <person name="Hogan J.R."/>
            <person name="Holmes M.H."/>
            <person name="Jaffe D."/>
            <person name="Johnston S.J."/>
            <person name="Kennedy R.C."/>
            <person name="Koo H."/>
            <person name="Kravitz S."/>
            <person name="Kriventseva E.V."/>
            <person name="Kulp D."/>
            <person name="Labutti K."/>
            <person name="Lee E."/>
            <person name="Li S."/>
            <person name="Lovin D.D."/>
            <person name="Mao C."/>
            <person name="Mauceli E."/>
            <person name="Menck C.F."/>
            <person name="Miller J.R."/>
            <person name="Montgomery P."/>
            <person name="Mori A."/>
            <person name="Nascimento A.L."/>
            <person name="Naveira H.F."/>
            <person name="Nusbaum C."/>
            <person name="O'Leary S.B."/>
            <person name="Orvis J."/>
            <person name="Pertea M."/>
            <person name="Quesneville H."/>
            <person name="Reidenbach K.R."/>
            <person name="Rogers Y.-H.C."/>
            <person name="Roth C.W."/>
            <person name="Schneider J.R."/>
            <person name="Schatz M."/>
            <person name="Shumway M."/>
            <person name="Stanke M."/>
            <person name="Stinson E.O."/>
            <person name="Tubio J.M.C."/>
            <person name="Vanzee J.P."/>
            <person name="Verjovski-Almeida S."/>
            <person name="Werner D."/>
            <person name="White O.R."/>
            <person name="Wyder S."/>
            <person name="Zeng Q."/>
            <person name="Zhao Q."/>
            <person name="Zhao Y."/>
            <person name="Hill C.A."/>
            <person name="Raikhel A.S."/>
            <person name="Soares M.B."/>
            <person name="Knudson D.L."/>
            <person name="Lee N.H."/>
            <person name="Galagan J."/>
            <person name="Salzberg S.L."/>
            <person name="Paulsen I.T."/>
            <person name="Dimopoulos G."/>
            <person name="Collins F.H."/>
            <person name="Bruce B."/>
            <person name="Fraser-Liggett C.M."/>
            <person name="Severson D.W."/>
        </authorList>
    </citation>
    <scope>NUCLEOTIDE SEQUENCE [LARGE SCALE GENOMIC DNA]</scope>
    <source>
        <strain>LVPib12</strain>
    </source>
</reference>
<dbReference type="EMBL" id="CH477486">
    <property type="protein sequence ID" value="EAT40127.1"/>
    <property type="molecule type" value="Genomic_DNA"/>
</dbReference>
<dbReference type="RefSeq" id="XP_001653107.1">
    <property type="nucleotide sequence ID" value="XM_001653057.1"/>
</dbReference>
<dbReference type="SMR" id="Q0IES7"/>
<dbReference type="FunCoup" id="Q0IES7">
    <property type="interactions" value="121"/>
</dbReference>
<dbReference type="STRING" id="7159.Q0IES7"/>
<dbReference type="PaxDb" id="7159-AAEL008109-PA"/>
<dbReference type="GeneID" id="5570128"/>
<dbReference type="KEGG" id="aag:5570128"/>
<dbReference type="VEuPathDB" id="VectorBase:AAEL008109"/>
<dbReference type="eggNOG" id="KOG3963">
    <property type="taxonomic scope" value="Eukaryota"/>
</dbReference>
<dbReference type="HOGENOM" id="CLU_045315_0_0_1"/>
<dbReference type="InParanoid" id="Q0IES7"/>
<dbReference type="OMA" id="WDESCIA"/>
<dbReference type="OrthoDB" id="5961151at2759"/>
<dbReference type="PhylomeDB" id="Q0IES7"/>
<dbReference type="Proteomes" id="UP000008820">
    <property type="component" value="Unassembled WGS sequence"/>
</dbReference>
<dbReference type="Proteomes" id="UP000682892">
    <property type="component" value="Chromosome 3"/>
</dbReference>
<dbReference type="FunFam" id="3.30.460.90:FF:000001">
    <property type="entry name" value="protein mab-21-like 2"/>
    <property type="match status" value="1"/>
</dbReference>
<dbReference type="Gene3D" id="1.10.1410.40">
    <property type="match status" value="1"/>
</dbReference>
<dbReference type="Gene3D" id="3.30.460.90">
    <property type="match status" value="1"/>
</dbReference>
<dbReference type="InterPro" id="IPR046903">
    <property type="entry name" value="Mab-21-like_nuc_Trfase"/>
</dbReference>
<dbReference type="InterPro" id="IPR046906">
    <property type="entry name" value="Mab-21_HhH/H2TH-like"/>
</dbReference>
<dbReference type="InterPro" id="IPR024810">
    <property type="entry name" value="MAB21L/cGLR"/>
</dbReference>
<dbReference type="PANTHER" id="PTHR10656">
    <property type="entry name" value="CELL FATE DETERMINING PROTEIN MAB21-RELATED"/>
    <property type="match status" value="1"/>
</dbReference>
<dbReference type="PANTHER" id="PTHR10656:SF70">
    <property type="entry name" value="PROTEIN MAB-21-RELATED"/>
    <property type="match status" value="1"/>
</dbReference>
<dbReference type="Pfam" id="PF03281">
    <property type="entry name" value="Mab-21"/>
    <property type="match status" value="1"/>
</dbReference>
<dbReference type="Pfam" id="PF20266">
    <property type="entry name" value="Mab-21_C"/>
    <property type="match status" value="1"/>
</dbReference>
<dbReference type="SMART" id="SM01265">
    <property type="entry name" value="Mab-21"/>
    <property type="match status" value="1"/>
</dbReference>
<feature type="chain" id="PRO_0000312797" description="Protein mab-21-like">
    <location>
        <begin position="1"/>
        <end position="365"/>
    </location>
</feature>
<proteinExistence type="inferred from homology"/>
<gene>
    <name type="ORF">AAEL008109</name>
</gene>
<accession>Q0IES7</accession>